<feature type="chain" id="PRO_0000054717" description="C alpha-dehydrogenase">
    <location>
        <begin position="1"/>
        <end position="305"/>
    </location>
</feature>
<feature type="active site" description="Proton acceptor" evidence="2">
    <location>
        <position position="157"/>
    </location>
</feature>
<feature type="binding site" evidence="1">
    <location>
        <begin position="10"/>
        <end position="34"/>
    </location>
    <ligand>
        <name>NAD(+)</name>
        <dbReference type="ChEBI" id="CHEBI:57540"/>
    </ligand>
</feature>
<feature type="binding site" evidence="1">
    <location>
        <position position="144"/>
    </location>
    <ligand>
        <name>substrate</name>
    </ligand>
</feature>
<keyword id="KW-0439">Lignin degradation</keyword>
<keyword id="KW-0560">Oxidoreductase</keyword>
<protein>
    <recommendedName>
        <fullName>C alpha-dehydrogenase</fullName>
        <ecNumber>1.-.-.-</ecNumber>
    </recommendedName>
</protein>
<proteinExistence type="inferred from homology"/>
<reference key="1">
    <citation type="journal article" date="1991" name="J. Bacteriol.">
        <title>Cloning and sequencing of the gene for a Pseudomonas paucimobilis enzyme that cleaves beta-aryl ether.</title>
        <authorList>
            <person name="Masai E."/>
            <person name="Katayama Y."/>
            <person name="Kawai S."/>
            <person name="Nishikawa S."/>
            <person name="Yamasaki M."/>
            <person name="Morohoshi N."/>
        </authorList>
    </citation>
    <scope>NUCLEOTIDE SEQUENCE [GENOMIC DNA]</scope>
    <source>
        <strain>NBRC 103272 / SYK-6</strain>
    </source>
</reference>
<reference key="2">
    <citation type="journal article" date="1993" name="FEBS Lett.">
        <title>A bacterial enzyme degrading the model lignin compound beta-etherase is a member of the glutathione-S-transferase superfamily.</title>
        <authorList>
            <person name="Masai E."/>
            <person name="Katayama Y."/>
            <person name="Kubota S."/>
            <person name="Kawai S."/>
            <person name="Yamasaki M."/>
            <person name="Morohoshi N."/>
        </authorList>
    </citation>
    <scope>NUCLEOTIDE SEQUENCE [GENOMIC DNA]</scope>
    <source>
        <strain>NBRC 103272 / SYK-6</strain>
    </source>
</reference>
<reference key="3">
    <citation type="journal article" date="1993" name="Biosci. Biotechnol. Biochem.">
        <title>Characterization of the C alpha-dehydrogenase gene involved in the cleavage of beta-aryl ether by Pseudomonas paucimobilis.</title>
        <authorList>
            <person name="Masai E."/>
            <person name="Kubota S."/>
            <person name="Katayama Y."/>
            <person name="Kawai S."/>
            <person name="Yamasaki M."/>
            <person name="Morohoshi N."/>
        </authorList>
    </citation>
    <scope>NUCLEOTIDE SEQUENCE [GENOMIC DNA]</scope>
    <source>
        <strain>NBRC 103272 / SYK-6</strain>
    </source>
</reference>
<name>LIGD_SPHSK</name>
<dbReference type="EC" id="1.-.-.-"/>
<dbReference type="EMBL" id="S67975">
    <property type="protein sequence ID" value="AAC60455.1"/>
    <property type="molecule type" value="Genomic_DNA"/>
</dbReference>
<dbReference type="EMBL" id="D11473">
    <property type="protein sequence ID" value="BAA02030.1"/>
    <property type="molecule type" value="Genomic_DNA"/>
</dbReference>
<dbReference type="EMBL" id="D11341">
    <property type="protein sequence ID" value="BAA01953.1"/>
    <property type="molecule type" value="Genomic_DNA"/>
</dbReference>
<dbReference type="PIR" id="S35991">
    <property type="entry name" value="S35991"/>
</dbReference>
<dbReference type="RefSeq" id="WP_014075190.1">
    <property type="nucleotide sequence ID" value="NC_015976.1"/>
</dbReference>
<dbReference type="SMR" id="Q01198"/>
<dbReference type="STRING" id="627192.SLG_08640"/>
<dbReference type="OrthoDB" id="7191281at2"/>
<dbReference type="BioCyc" id="MetaCyc:MONOMER-15126"/>
<dbReference type="UniPathway" id="UPA00892"/>
<dbReference type="GO" id="GO:0016491">
    <property type="term" value="F:oxidoreductase activity"/>
    <property type="evidence" value="ECO:0007669"/>
    <property type="project" value="UniProtKB-KW"/>
</dbReference>
<dbReference type="GO" id="GO:0046274">
    <property type="term" value="P:lignin catabolic process"/>
    <property type="evidence" value="ECO:0007669"/>
    <property type="project" value="UniProtKB-UniPathway"/>
</dbReference>
<dbReference type="CDD" id="cd05233">
    <property type="entry name" value="SDR_c"/>
    <property type="match status" value="1"/>
</dbReference>
<dbReference type="Gene3D" id="3.40.50.720">
    <property type="entry name" value="NAD(P)-binding Rossmann-like Domain"/>
    <property type="match status" value="1"/>
</dbReference>
<dbReference type="InterPro" id="IPR036291">
    <property type="entry name" value="NAD(P)-bd_dom_sf"/>
</dbReference>
<dbReference type="InterPro" id="IPR020904">
    <property type="entry name" value="Sc_DH/Rdtase_CS"/>
</dbReference>
<dbReference type="InterPro" id="IPR002347">
    <property type="entry name" value="SDR_fam"/>
</dbReference>
<dbReference type="PANTHER" id="PTHR43391:SF12">
    <property type="entry name" value="OXIDOREDUCTASE EPHD-RELATED"/>
    <property type="match status" value="1"/>
</dbReference>
<dbReference type="PANTHER" id="PTHR43391">
    <property type="entry name" value="RETINOL DEHYDROGENASE-RELATED"/>
    <property type="match status" value="1"/>
</dbReference>
<dbReference type="Pfam" id="PF00106">
    <property type="entry name" value="adh_short"/>
    <property type="match status" value="1"/>
</dbReference>
<dbReference type="PRINTS" id="PR00081">
    <property type="entry name" value="GDHRDH"/>
</dbReference>
<dbReference type="SUPFAM" id="SSF51735">
    <property type="entry name" value="NAD(P)-binding Rossmann-fold domains"/>
    <property type="match status" value="1"/>
</dbReference>
<dbReference type="PROSITE" id="PS00061">
    <property type="entry name" value="ADH_SHORT"/>
    <property type="match status" value="1"/>
</dbReference>
<organism>
    <name type="scientific">Sphingobium sp. (strain NBRC 103272 / SYK-6)</name>
    <dbReference type="NCBI Taxonomy" id="627192"/>
    <lineage>
        <taxon>Bacteria</taxon>
        <taxon>Pseudomonadati</taxon>
        <taxon>Pseudomonadota</taxon>
        <taxon>Alphaproteobacteria</taxon>
        <taxon>Sphingomonadales</taxon>
        <taxon>Sphingomonadaceae</taxon>
        <taxon>Sphingobium</taxon>
    </lineage>
</organism>
<evidence type="ECO:0000250" key="1"/>
<evidence type="ECO:0000255" key="2">
    <source>
        <dbReference type="PROSITE-ProRule" id="PRU10001"/>
    </source>
</evidence>
<evidence type="ECO:0000305" key="3"/>
<sequence length="305" mass="32344">MKDFQDQVAFITGGASGAGFGQAKVFGQAGAKIVVADVRAEAVEKAVAELEGLGITAHGIVLDIMDREAYARAADEVEAVFGQAPTLLSNTAGVNSFGPIEKTTYDDFDWIIGVNLNGVINGMVTFVPRMIASGRPGHIVTVSSLGGFMGSALAGPYSAAKAASINLMEGYRQGLEKYGIGVSVCTPANIKSNIAEASRLRPAKYGTSGYVENEESIASLHSIHQHGLEPEKLAEAIKKGVEDNALYIIPYPEVREGLEKHFQAIIDSVAPMESDPEGARQRVEALMAWGRDRTRVFAEGDKKGA</sequence>
<gene>
    <name type="primary">ligD</name>
</gene>
<comment type="function">
    <text>Catalyzes the C alpha dehydrogenation of arylglycerol-beta-aryl ether (C alpha alcohol type) (compound IV).</text>
</comment>
<comment type="pathway">
    <text>Secondary metabolite metabolism; lignin degradation.</text>
</comment>
<comment type="similarity">
    <text evidence="3">Belongs to the short-chain dehydrogenases/reductases (SDR) family.</text>
</comment>
<accession>Q01198</accession>